<proteinExistence type="predicted"/>
<accession>Q46808</accession>
<accession>Q2M9W5</accession>
<dbReference type="EMBL" id="U28375">
    <property type="protein sequence ID" value="AAA83056.1"/>
    <property type="molecule type" value="Genomic_DNA"/>
</dbReference>
<dbReference type="EMBL" id="U00096">
    <property type="protein sequence ID" value="AAC75913.1"/>
    <property type="molecule type" value="Genomic_DNA"/>
</dbReference>
<dbReference type="EMBL" id="AP009048">
    <property type="protein sequence ID" value="BAE76941.1"/>
    <property type="molecule type" value="Genomic_DNA"/>
</dbReference>
<dbReference type="PIR" id="C65071">
    <property type="entry name" value="C65071"/>
</dbReference>
<dbReference type="RefSeq" id="NP_417351.1">
    <property type="nucleotide sequence ID" value="NC_000913.3"/>
</dbReference>
<dbReference type="RefSeq" id="WP_001020381.1">
    <property type="nucleotide sequence ID" value="NZ_LN832404.1"/>
</dbReference>
<dbReference type="SMR" id="Q46808"/>
<dbReference type="BioGRID" id="4259703">
    <property type="interactions" value="16"/>
</dbReference>
<dbReference type="DIP" id="DIP-12851N"/>
<dbReference type="FunCoup" id="Q46808">
    <property type="interactions" value="12"/>
</dbReference>
<dbReference type="IntAct" id="Q46808">
    <property type="interactions" value="2"/>
</dbReference>
<dbReference type="STRING" id="511145.b2875"/>
<dbReference type="PaxDb" id="511145-b2875"/>
<dbReference type="EnsemblBacteria" id="AAC75913">
    <property type="protein sequence ID" value="AAC75913"/>
    <property type="gene ID" value="b2875"/>
</dbReference>
<dbReference type="GeneID" id="75172975"/>
<dbReference type="GeneID" id="947357"/>
<dbReference type="KEGG" id="ecj:JW2843"/>
<dbReference type="KEGG" id="eco:b2875"/>
<dbReference type="KEGG" id="ecoc:C3026_15770"/>
<dbReference type="PATRIC" id="fig|511145.12.peg.2968"/>
<dbReference type="EchoBASE" id="EB2870"/>
<dbReference type="eggNOG" id="COG1975">
    <property type="taxonomic scope" value="Bacteria"/>
</dbReference>
<dbReference type="eggNOG" id="COG3608">
    <property type="taxonomic scope" value="Bacteria"/>
</dbReference>
<dbReference type="HOGENOM" id="CLU_513549_0_0_6"/>
<dbReference type="InParanoid" id="Q46808"/>
<dbReference type="OMA" id="RKVQTFT"/>
<dbReference type="OrthoDB" id="9815497at2"/>
<dbReference type="BioCyc" id="EcoCyc:G7494-MONOMER"/>
<dbReference type="PRO" id="PR:Q46808"/>
<dbReference type="Proteomes" id="UP000000625">
    <property type="component" value="Chromosome"/>
</dbReference>
<dbReference type="Gene3D" id="3.40.50.720">
    <property type="entry name" value="NAD(P)-binding Rossmann-like Domain"/>
    <property type="match status" value="1"/>
</dbReference>
<dbReference type="Gene3D" id="3.40.630.10">
    <property type="entry name" value="Zn peptidases"/>
    <property type="match status" value="1"/>
</dbReference>
<dbReference type="InterPro" id="IPR052698">
    <property type="entry name" value="MoCofactor_Util/Proc"/>
</dbReference>
<dbReference type="InterPro" id="IPR017695">
    <property type="entry name" value="Se-dep_Mo_hydrolase_YqeB"/>
</dbReference>
<dbReference type="InterPro" id="IPR003777">
    <property type="entry name" value="XdhC_CoxI"/>
</dbReference>
<dbReference type="InterPro" id="IPR027051">
    <property type="entry name" value="XdhC_Rossmann_dom"/>
</dbReference>
<dbReference type="NCBIfam" id="TIGR03309">
    <property type="entry name" value="matur_yqeB"/>
    <property type="match status" value="1"/>
</dbReference>
<dbReference type="PANTHER" id="PTHR30388">
    <property type="entry name" value="ALDEHYDE OXIDOREDUCTASE MOLYBDENUM COFACTOR ASSEMBLY PROTEIN"/>
    <property type="match status" value="1"/>
</dbReference>
<dbReference type="PANTHER" id="PTHR30388:SF6">
    <property type="entry name" value="XANTHINE DEHYDROGENASE SUBUNIT A-RELATED"/>
    <property type="match status" value="1"/>
</dbReference>
<dbReference type="Pfam" id="PF13478">
    <property type="entry name" value="XdhC_C"/>
    <property type="match status" value="1"/>
</dbReference>
<dbReference type="Pfam" id="PF02625">
    <property type="entry name" value="XdhC_CoxI"/>
    <property type="match status" value="1"/>
</dbReference>
<dbReference type="SUPFAM" id="SSF53187">
    <property type="entry name" value="Zn-dependent exopeptidases"/>
    <property type="match status" value="1"/>
</dbReference>
<keyword id="KW-1185">Reference proteome</keyword>
<reference key="1">
    <citation type="journal article" date="1997" name="Science">
        <title>The complete genome sequence of Escherichia coli K-12.</title>
        <authorList>
            <person name="Blattner F.R."/>
            <person name="Plunkett G. III"/>
            <person name="Bloch C.A."/>
            <person name="Perna N.T."/>
            <person name="Burland V."/>
            <person name="Riley M."/>
            <person name="Collado-Vides J."/>
            <person name="Glasner J.D."/>
            <person name="Rode C.K."/>
            <person name="Mayhew G.F."/>
            <person name="Gregor J."/>
            <person name="Davis N.W."/>
            <person name="Kirkpatrick H.A."/>
            <person name="Goeden M.A."/>
            <person name="Rose D.J."/>
            <person name="Mau B."/>
            <person name="Shao Y."/>
        </authorList>
    </citation>
    <scope>NUCLEOTIDE SEQUENCE [LARGE SCALE GENOMIC DNA]</scope>
    <source>
        <strain>K12 / MG1655 / ATCC 47076</strain>
    </source>
</reference>
<reference key="2">
    <citation type="journal article" date="2006" name="Mol. Syst. Biol.">
        <title>Highly accurate genome sequences of Escherichia coli K-12 strains MG1655 and W3110.</title>
        <authorList>
            <person name="Hayashi K."/>
            <person name="Morooka N."/>
            <person name="Yamamoto Y."/>
            <person name="Fujita K."/>
            <person name="Isono K."/>
            <person name="Choi S."/>
            <person name="Ohtsubo E."/>
            <person name="Baba T."/>
            <person name="Wanner B.L."/>
            <person name="Mori H."/>
            <person name="Horiuchi T."/>
        </authorList>
    </citation>
    <scope>NUCLEOTIDE SEQUENCE [LARGE SCALE GENOMIC DNA]</scope>
    <source>
        <strain>K12 / W3110 / ATCC 27325 / DSM 5911</strain>
    </source>
</reference>
<organism>
    <name type="scientific">Escherichia coli (strain K12)</name>
    <dbReference type="NCBI Taxonomy" id="83333"/>
    <lineage>
        <taxon>Bacteria</taxon>
        <taxon>Pseudomonadati</taxon>
        <taxon>Pseudomonadota</taxon>
        <taxon>Gammaproteobacteria</taxon>
        <taxon>Enterobacterales</taxon>
        <taxon>Enterobacteriaceae</taxon>
        <taxon>Escherichia</taxon>
    </lineage>
</organism>
<gene>
    <name type="primary">yqeB</name>
    <name type="ordered locus">b2875</name>
    <name type="ordered locus">JW2843</name>
</gene>
<protein>
    <recommendedName>
        <fullName>Uncharacterized protein YqeB</fullName>
    </recommendedName>
</protein>
<name>YQEB_ECOLI</name>
<feature type="chain" id="PRO_0000169344" description="Uncharacterized protein YqeB">
    <location>
        <begin position="1"/>
        <end position="541"/>
    </location>
</feature>
<sequence>MNIFTEAAKLEEQNCPFAMAQIVDSRGSTPRHSAQMLVRADGSIVGTIGGGMVERKVIEESLQALQERKPRLFHGRMARNGADAVGSDCGGAMSVFISVHGMRPRLVLIGAGHVNRAIAQSAALLGFDIAVADIYRESLNPELFPPSTTLLHAESFGAAVEALDIRPDNFVLIATNNQDREALDKLIEQPIAWLGLLASRRKVQLFLRQLREKGVAEEHIARLHAPVGYNIGAETPQEIAISVLAEILQVKNNAPGGLMMKPSHPSGHQLVVIRGAGDIASGVALRLYHAGFKVIMLEVEKPTVIRCTVAFAQAVFDGEMTVEGVTARLATSSAEAMKLTERGFIPVMVDPACSLLDELKPLCVVDAILAKQNLGTRADMAPVTIALGPGFTAGKDCHAVIETNRGHWLGQVIYSGCAQENTGVPGNIMGHTTRRVIRAPAAGIMRSNVKLGDLVKEGDVIAWIGEHEIKAPLTGMVRGLLNDGLAVVGGFKIGDIDPRGETADFTSVSDKARAIGGGVLEALMMLMHQGVKATKEVLEVA</sequence>